<protein>
    <recommendedName>
        <fullName evidence="1">Translation initiation factor IF-3</fullName>
    </recommendedName>
</protein>
<reference key="1">
    <citation type="submission" date="2006-12" db="EMBL/GenBank/DDBJ databases">
        <title>Complete sequence of Chlorobium phaeobacteroides DSM 266.</title>
        <authorList>
            <consortium name="US DOE Joint Genome Institute"/>
            <person name="Copeland A."/>
            <person name="Lucas S."/>
            <person name="Lapidus A."/>
            <person name="Barry K."/>
            <person name="Detter J.C."/>
            <person name="Glavina del Rio T."/>
            <person name="Hammon N."/>
            <person name="Israni S."/>
            <person name="Pitluck S."/>
            <person name="Goltsman E."/>
            <person name="Schmutz J."/>
            <person name="Larimer F."/>
            <person name="Land M."/>
            <person name="Hauser L."/>
            <person name="Mikhailova N."/>
            <person name="Li T."/>
            <person name="Overmann J."/>
            <person name="Bryant D.A."/>
            <person name="Richardson P."/>
        </authorList>
    </citation>
    <scope>NUCLEOTIDE SEQUENCE [LARGE SCALE GENOMIC DNA]</scope>
    <source>
        <strain>DSM 266 / SMG 266 / 2430</strain>
    </source>
</reference>
<organism>
    <name type="scientific">Chlorobium phaeobacteroides (strain DSM 266 / SMG 266 / 2430)</name>
    <dbReference type="NCBI Taxonomy" id="290317"/>
    <lineage>
        <taxon>Bacteria</taxon>
        <taxon>Pseudomonadati</taxon>
        <taxon>Chlorobiota</taxon>
        <taxon>Chlorobiia</taxon>
        <taxon>Chlorobiales</taxon>
        <taxon>Chlorobiaceae</taxon>
        <taxon>Chlorobium/Pelodictyon group</taxon>
        <taxon>Chlorobium</taxon>
    </lineage>
</organism>
<feature type="chain" id="PRO_1000004537" description="Translation initiation factor IF-3">
    <location>
        <begin position="1"/>
        <end position="209"/>
    </location>
</feature>
<sequence>MKKQKTTTQKPKLSYRINEQIRVPEVRIIFPDGTQQVMKTIDAKRLAEEKNFDLIEVQPNADPPVCKLDNLGKLIYKMDKRDKDLKKKQKTTTLKELRFHPNTDKHDFDFKTAHLEEFLRKGNRVRATIVFLGRSIIYKDRGLELAERLTERLSCVSNRDGDPKFEGKKLFVYFEPDKKKVDAFERIKAKTGVPQQPLAPLPPSEDIEE</sequence>
<evidence type="ECO:0000255" key="1">
    <source>
        <dbReference type="HAMAP-Rule" id="MF_00080"/>
    </source>
</evidence>
<keyword id="KW-0963">Cytoplasm</keyword>
<keyword id="KW-0396">Initiation factor</keyword>
<keyword id="KW-0648">Protein biosynthesis</keyword>
<keyword id="KW-1185">Reference proteome</keyword>
<gene>
    <name evidence="1" type="primary">infC</name>
    <name type="ordered locus">Cpha266_2502</name>
</gene>
<name>IF3_CHLPD</name>
<accession>A1BJB3</accession>
<proteinExistence type="inferred from homology"/>
<dbReference type="EMBL" id="CP000492">
    <property type="protein sequence ID" value="ABL66490.1"/>
    <property type="molecule type" value="Genomic_DNA"/>
</dbReference>
<dbReference type="RefSeq" id="WP_011746267.1">
    <property type="nucleotide sequence ID" value="NC_008639.1"/>
</dbReference>
<dbReference type="SMR" id="A1BJB3"/>
<dbReference type="STRING" id="290317.Cpha266_2502"/>
<dbReference type="KEGG" id="cph:Cpha266_2502"/>
<dbReference type="eggNOG" id="COG0290">
    <property type="taxonomic scope" value="Bacteria"/>
</dbReference>
<dbReference type="HOGENOM" id="CLU_054919_3_0_10"/>
<dbReference type="OrthoDB" id="9806014at2"/>
<dbReference type="Proteomes" id="UP000008701">
    <property type="component" value="Chromosome"/>
</dbReference>
<dbReference type="GO" id="GO:0005737">
    <property type="term" value="C:cytoplasm"/>
    <property type="evidence" value="ECO:0007669"/>
    <property type="project" value="UniProtKB-SubCell"/>
</dbReference>
<dbReference type="GO" id="GO:0043022">
    <property type="term" value="F:ribosome binding"/>
    <property type="evidence" value="ECO:0007669"/>
    <property type="project" value="TreeGrafter"/>
</dbReference>
<dbReference type="GO" id="GO:0003743">
    <property type="term" value="F:translation initiation factor activity"/>
    <property type="evidence" value="ECO:0007669"/>
    <property type="project" value="UniProtKB-UniRule"/>
</dbReference>
<dbReference type="GO" id="GO:0032790">
    <property type="term" value="P:ribosome disassembly"/>
    <property type="evidence" value="ECO:0007669"/>
    <property type="project" value="TreeGrafter"/>
</dbReference>
<dbReference type="Gene3D" id="3.30.110.10">
    <property type="entry name" value="Translation initiation factor 3 (IF-3), C-terminal domain"/>
    <property type="match status" value="1"/>
</dbReference>
<dbReference type="Gene3D" id="3.10.20.80">
    <property type="entry name" value="Translation initiation factor 3 (IF-3), N-terminal domain"/>
    <property type="match status" value="1"/>
</dbReference>
<dbReference type="HAMAP" id="MF_00080">
    <property type="entry name" value="IF_3"/>
    <property type="match status" value="1"/>
</dbReference>
<dbReference type="InterPro" id="IPR036788">
    <property type="entry name" value="T_IF-3_C_sf"/>
</dbReference>
<dbReference type="InterPro" id="IPR036787">
    <property type="entry name" value="T_IF-3_N_sf"/>
</dbReference>
<dbReference type="InterPro" id="IPR001288">
    <property type="entry name" value="Translation_initiation_fac_3"/>
</dbReference>
<dbReference type="InterPro" id="IPR019815">
    <property type="entry name" value="Translation_initiation_fac_3_C"/>
</dbReference>
<dbReference type="InterPro" id="IPR019814">
    <property type="entry name" value="Translation_initiation_fac_3_N"/>
</dbReference>
<dbReference type="NCBIfam" id="TIGR00168">
    <property type="entry name" value="infC"/>
    <property type="match status" value="1"/>
</dbReference>
<dbReference type="PANTHER" id="PTHR10938">
    <property type="entry name" value="TRANSLATION INITIATION FACTOR IF-3"/>
    <property type="match status" value="1"/>
</dbReference>
<dbReference type="PANTHER" id="PTHR10938:SF0">
    <property type="entry name" value="TRANSLATION INITIATION FACTOR IF-3, MITOCHONDRIAL"/>
    <property type="match status" value="1"/>
</dbReference>
<dbReference type="Pfam" id="PF00707">
    <property type="entry name" value="IF3_C"/>
    <property type="match status" value="1"/>
</dbReference>
<dbReference type="Pfam" id="PF05198">
    <property type="entry name" value="IF3_N"/>
    <property type="match status" value="1"/>
</dbReference>
<dbReference type="SUPFAM" id="SSF55200">
    <property type="entry name" value="Translation initiation factor IF3, C-terminal domain"/>
    <property type="match status" value="1"/>
</dbReference>
<dbReference type="SUPFAM" id="SSF54364">
    <property type="entry name" value="Translation initiation factor IF3, N-terminal domain"/>
    <property type="match status" value="1"/>
</dbReference>
<comment type="function">
    <text evidence="1">IF-3 binds to the 30S ribosomal subunit and shifts the equilibrium between 70S ribosomes and their 50S and 30S subunits in favor of the free subunits, thus enhancing the availability of 30S subunits on which protein synthesis initiation begins.</text>
</comment>
<comment type="subunit">
    <text evidence="1">Monomer.</text>
</comment>
<comment type="subcellular location">
    <subcellularLocation>
        <location evidence="1">Cytoplasm</location>
    </subcellularLocation>
</comment>
<comment type="similarity">
    <text evidence="1">Belongs to the IF-3 family.</text>
</comment>